<name>ZN773_HUMAN</name>
<proteinExistence type="evidence at protein level"/>
<protein>
    <recommendedName>
        <fullName>Zinc finger protein 773</fullName>
    </recommendedName>
    <alternativeName>
        <fullName>Zinc finger protein 419B</fullName>
    </alternativeName>
</protein>
<accession>Q6PK81</accession>
<accession>Q96DL8</accession>
<evidence type="ECO:0000255" key="1">
    <source>
        <dbReference type="PROSITE-ProRule" id="PRU00042"/>
    </source>
</evidence>
<evidence type="ECO:0000255" key="2">
    <source>
        <dbReference type="PROSITE-ProRule" id="PRU00119"/>
    </source>
</evidence>
<evidence type="ECO:0000303" key="3">
    <source>
    </source>
</evidence>
<evidence type="ECO:0000305" key="4"/>
<organism>
    <name type="scientific">Homo sapiens</name>
    <name type="common">Human</name>
    <dbReference type="NCBI Taxonomy" id="9606"/>
    <lineage>
        <taxon>Eukaryota</taxon>
        <taxon>Metazoa</taxon>
        <taxon>Chordata</taxon>
        <taxon>Craniata</taxon>
        <taxon>Vertebrata</taxon>
        <taxon>Euteleostomi</taxon>
        <taxon>Mammalia</taxon>
        <taxon>Eutheria</taxon>
        <taxon>Euarchontoglires</taxon>
        <taxon>Primates</taxon>
        <taxon>Haplorrhini</taxon>
        <taxon>Catarrhini</taxon>
        <taxon>Hominidae</taxon>
        <taxon>Homo</taxon>
    </lineage>
</organism>
<keyword id="KW-0025">Alternative splicing</keyword>
<keyword id="KW-0238">DNA-binding</keyword>
<keyword id="KW-0479">Metal-binding</keyword>
<keyword id="KW-0539">Nucleus</keyword>
<keyword id="KW-1267">Proteomics identification</keyword>
<keyword id="KW-1185">Reference proteome</keyword>
<keyword id="KW-0677">Repeat</keyword>
<keyword id="KW-0804">Transcription</keyword>
<keyword id="KW-0805">Transcription regulation</keyword>
<keyword id="KW-0862">Zinc</keyword>
<keyword id="KW-0863">Zinc-finger</keyword>
<feature type="chain" id="PRO_0000285303" description="Zinc finger protein 773">
    <location>
        <begin position="1"/>
        <end position="442"/>
    </location>
</feature>
<feature type="domain" description="KRAB" evidence="2">
    <location>
        <begin position="15"/>
        <end position="86"/>
    </location>
</feature>
<feature type="zinc finger region" description="C2H2-type 1" evidence="1">
    <location>
        <begin position="191"/>
        <end position="213"/>
    </location>
</feature>
<feature type="zinc finger region" description="C2H2-type 2" evidence="1">
    <location>
        <begin position="219"/>
        <end position="241"/>
    </location>
</feature>
<feature type="zinc finger region" description="C2H2-type 3" evidence="1">
    <location>
        <begin position="247"/>
        <end position="269"/>
    </location>
</feature>
<feature type="zinc finger region" description="C2H2-type 4" evidence="1">
    <location>
        <begin position="275"/>
        <end position="297"/>
    </location>
</feature>
<feature type="zinc finger region" description="C2H2-type 5" evidence="1">
    <location>
        <begin position="303"/>
        <end position="325"/>
    </location>
</feature>
<feature type="zinc finger region" description="C2H2-type 6" evidence="1">
    <location>
        <begin position="331"/>
        <end position="353"/>
    </location>
</feature>
<feature type="zinc finger region" description="C2H2-type 7" evidence="1">
    <location>
        <begin position="359"/>
        <end position="381"/>
    </location>
</feature>
<feature type="zinc finger region" description="C2H2-type 8" evidence="1">
    <location>
        <begin position="387"/>
        <end position="409"/>
    </location>
</feature>
<feature type="zinc finger region" description="C2H2-type 9" evidence="1">
    <location>
        <begin position="415"/>
        <end position="437"/>
    </location>
</feature>
<feature type="splice variant" id="VSP_024870" description="In isoform 2." evidence="3">
    <location>
        <position position="12"/>
    </location>
</feature>
<comment type="function">
    <text>May be involved in transcriptional regulation.</text>
</comment>
<comment type="interaction">
    <interactant intactId="EBI-2686307">
        <id>Q6PK81</id>
    </interactant>
    <interactant intactId="EBI-740492">
        <id>Q9UKI8</id>
        <label>TLK1</label>
    </interactant>
    <organismsDiffer>false</organismsDiffer>
    <experiments>3</experiments>
</comment>
<comment type="interaction">
    <interactant intactId="EBI-2686307">
        <id>Q6PK81</id>
    </interactant>
    <interactant intactId="EBI-725997">
        <id>Q8WV44</id>
        <label>TRIM41</label>
    </interactant>
    <organismsDiffer>false</organismsDiffer>
    <experiments>3</experiments>
</comment>
<comment type="subcellular location">
    <subcellularLocation>
        <location evidence="4">Nucleus</location>
    </subcellularLocation>
</comment>
<comment type="alternative products">
    <event type="alternative splicing"/>
    <isoform>
        <id>Q6PK81-1</id>
        <name>1</name>
        <sequence type="displayed"/>
    </isoform>
    <isoform>
        <id>Q6PK81-2</id>
        <name>2</name>
        <sequence type="described" ref="VSP_024870"/>
    </isoform>
</comment>
<comment type="similarity">
    <text evidence="4">Belongs to the krueppel C2H2-type zinc-finger protein family.</text>
</comment>
<gene>
    <name type="primary">ZNF773</name>
    <name type="synonym">ZNF419B</name>
</gene>
<reference key="1">
    <citation type="journal article" date="2004" name="Nat. Genet.">
        <title>Complete sequencing and characterization of 21,243 full-length human cDNAs.</title>
        <authorList>
            <person name="Ota T."/>
            <person name="Suzuki Y."/>
            <person name="Nishikawa T."/>
            <person name="Otsuki T."/>
            <person name="Sugiyama T."/>
            <person name="Irie R."/>
            <person name="Wakamatsu A."/>
            <person name="Hayashi K."/>
            <person name="Sato H."/>
            <person name="Nagai K."/>
            <person name="Kimura K."/>
            <person name="Makita H."/>
            <person name="Sekine M."/>
            <person name="Obayashi M."/>
            <person name="Nishi T."/>
            <person name="Shibahara T."/>
            <person name="Tanaka T."/>
            <person name="Ishii S."/>
            <person name="Yamamoto J."/>
            <person name="Saito K."/>
            <person name="Kawai Y."/>
            <person name="Isono Y."/>
            <person name="Nakamura Y."/>
            <person name="Nagahari K."/>
            <person name="Murakami K."/>
            <person name="Yasuda T."/>
            <person name="Iwayanagi T."/>
            <person name="Wagatsuma M."/>
            <person name="Shiratori A."/>
            <person name="Sudo H."/>
            <person name="Hosoiri T."/>
            <person name="Kaku Y."/>
            <person name="Kodaira H."/>
            <person name="Kondo H."/>
            <person name="Sugawara M."/>
            <person name="Takahashi M."/>
            <person name="Kanda K."/>
            <person name="Yokoi T."/>
            <person name="Furuya T."/>
            <person name="Kikkawa E."/>
            <person name="Omura Y."/>
            <person name="Abe K."/>
            <person name="Kamihara K."/>
            <person name="Katsuta N."/>
            <person name="Sato K."/>
            <person name="Tanikawa M."/>
            <person name="Yamazaki M."/>
            <person name="Ninomiya K."/>
            <person name="Ishibashi T."/>
            <person name="Yamashita H."/>
            <person name="Murakawa K."/>
            <person name="Fujimori K."/>
            <person name="Tanai H."/>
            <person name="Kimata M."/>
            <person name="Watanabe M."/>
            <person name="Hiraoka S."/>
            <person name="Chiba Y."/>
            <person name="Ishida S."/>
            <person name="Ono Y."/>
            <person name="Takiguchi S."/>
            <person name="Watanabe S."/>
            <person name="Yosida M."/>
            <person name="Hotuta T."/>
            <person name="Kusano J."/>
            <person name="Kanehori K."/>
            <person name="Takahashi-Fujii A."/>
            <person name="Hara H."/>
            <person name="Tanase T.-O."/>
            <person name="Nomura Y."/>
            <person name="Togiya S."/>
            <person name="Komai F."/>
            <person name="Hara R."/>
            <person name="Takeuchi K."/>
            <person name="Arita M."/>
            <person name="Imose N."/>
            <person name="Musashino K."/>
            <person name="Yuuki H."/>
            <person name="Oshima A."/>
            <person name="Sasaki N."/>
            <person name="Aotsuka S."/>
            <person name="Yoshikawa Y."/>
            <person name="Matsunawa H."/>
            <person name="Ichihara T."/>
            <person name="Shiohata N."/>
            <person name="Sano S."/>
            <person name="Moriya S."/>
            <person name="Momiyama H."/>
            <person name="Satoh N."/>
            <person name="Takami S."/>
            <person name="Terashima Y."/>
            <person name="Suzuki O."/>
            <person name="Nakagawa S."/>
            <person name="Senoh A."/>
            <person name="Mizoguchi H."/>
            <person name="Goto Y."/>
            <person name="Shimizu F."/>
            <person name="Wakebe H."/>
            <person name="Hishigaki H."/>
            <person name="Watanabe T."/>
            <person name="Sugiyama A."/>
            <person name="Takemoto M."/>
            <person name="Kawakami B."/>
            <person name="Yamazaki M."/>
            <person name="Watanabe K."/>
            <person name="Kumagai A."/>
            <person name="Itakura S."/>
            <person name="Fukuzumi Y."/>
            <person name="Fujimori Y."/>
            <person name="Komiyama M."/>
            <person name="Tashiro H."/>
            <person name="Tanigami A."/>
            <person name="Fujiwara T."/>
            <person name="Ono T."/>
            <person name="Yamada K."/>
            <person name="Fujii Y."/>
            <person name="Ozaki K."/>
            <person name="Hirao M."/>
            <person name="Ohmori Y."/>
            <person name="Kawabata A."/>
            <person name="Hikiji T."/>
            <person name="Kobatake N."/>
            <person name="Inagaki H."/>
            <person name="Ikema Y."/>
            <person name="Okamoto S."/>
            <person name="Okitani R."/>
            <person name="Kawakami T."/>
            <person name="Noguchi S."/>
            <person name="Itoh T."/>
            <person name="Shigeta K."/>
            <person name="Senba T."/>
            <person name="Matsumura K."/>
            <person name="Nakajima Y."/>
            <person name="Mizuno T."/>
            <person name="Morinaga M."/>
            <person name="Sasaki M."/>
            <person name="Togashi T."/>
            <person name="Oyama M."/>
            <person name="Hata H."/>
            <person name="Watanabe M."/>
            <person name="Komatsu T."/>
            <person name="Mizushima-Sugano J."/>
            <person name="Satoh T."/>
            <person name="Shirai Y."/>
            <person name="Takahashi Y."/>
            <person name="Nakagawa K."/>
            <person name="Okumura K."/>
            <person name="Nagase T."/>
            <person name="Nomura N."/>
            <person name="Kikuchi H."/>
            <person name="Masuho Y."/>
            <person name="Yamashita R."/>
            <person name="Nakai K."/>
            <person name="Yada T."/>
            <person name="Nakamura Y."/>
            <person name="Ohara O."/>
            <person name="Isogai T."/>
            <person name="Sugano S."/>
        </authorList>
    </citation>
    <scope>NUCLEOTIDE SEQUENCE [LARGE SCALE MRNA] (ISOFORM 2)</scope>
    <source>
        <tissue>Synovial cell</tissue>
    </source>
</reference>
<reference key="2">
    <citation type="journal article" date="2004" name="Genome Res.">
        <title>The status, quality, and expansion of the NIH full-length cDNA project: the Mammalian Gene Collection (MGC).</title>
        <authorList>
            <consortium name="The MGC Project Team"/>
        </authorList>
    </citation>
    <scope>NUCLEOTIDE SEQUENCE [LARGE SCALE MRNA] (ISOFORM 1)</scope>
    <source>
        <tissue>Lung</tissue>
    </source>
</reference>
<dbReference type="EMBL" id="AK057209">
    <property type="protein sequence ID" value="BAB71382.1"/>
    <property type="molecule type" value="mRNA"/>
</dbReference>
<dbReference type="EMBL" id="BC005167">
    <property type="protein sequence ID" value="AAH05167.1"/>
    <property type="molecule type" value="mRNA"/>
</dbReference>
<dbReference type="CCDS" id="CCDS33134.1">
    <molecule id="Q6PK81-1"/>
</dbReference>
<dbReference type="CCDS" id="CCDS77368.1">
    <molecule id="Q6PK81-2"/>
</dbReference>
<dbReference type="RefSeq" id="NP_001291263.1">
    <molecule id="Q6PK81-2"/>
    <property type="nucleotide sequence ID" value="NM_001304334.2"/>
</dbReference>
<dbReference type="RefSeq" id="NP_940944.1">
    <molecule id="Q6PK81-1"/>
    <property type="nucleotide sequence ID" value="NM_198542.3"/>
</dbReference>
<dbReference type="SMR" id="Q6PK81"/>
<dbReference type="BioGRID" id="131939">
    <property type="interactions" value="13"/>
</dbReference>
<dbReference type="FunCoup" id="Q6PK81">
    <property type="interactions" value="88"/>
</dbReference>
<dbReference type="IntAct" id="Q6PK81">
    <property type="interactions" value="11"/>
</dbReference>
<dbReference type="STRING" id="9606.ENSP00000282292"/>
<dbReference type="iPTMnet" id="Q6PK81"/>
<dbReference type="PhosphoSitePlus" id="Q6PK81"/>
<dbReference type="BioMuta" id="ZNF773"/>
<dbReference type="DMDM" id="74758405"/>
<dbReference type="jPOST" id="Q6PK81"/>
<dbReference type="MassIVE" id="Q6PK81"/>
<dbReference type="PaxDb" id="9606-ENSP00000282292"/>
<dbReference type="PeptideAtlas" id="Q6PK81"/>
<dbReference type="ProteomicsDB" id="67236">
    <molecule id="Q6PK81-1"/>
</dbReference>
<dbReference type="ProteomicsDB" id="67237">
    <molecule id="Q6PK81-2"/>
</dbReference>
<dbReference type="Pumba" id="Q6PK81"/>
<dbReference type="Antibodypedia" id="33265">
    <property type="antibodies" value="119 antibodies from 17 providers"/>
</dbReference>
<dbReference type="DNASU" id="374928"/>
<dbReference type="Ensembl" id="ENST00000282292.9">
    <molecule id="Q6PK81-1"/>
    <property type="protein sequence ID" value="ENSP00000282292.3"/>
    <property type="gene ID" value="ENSG00000152439.13"/>
</dbReference>
<dbReference type="Ensembl" id="ENST00000598770.5">
    <molecule id="Q6PK81-2"/>
    <property type="protein sequence ID" value="ENSP00000469416.1"/>
    <property type="gene ID" value="ENSG00000152439.13"/>
</dbReference>
<dbReference type="GeneID" id="374928"/>
<dbReference type="KEGG" id="hsa:374928"/>
<dbReference type="MANE-Select" id="ENST00000282292.9">
    <property type="protein sequence ID" value="ENSP00000282292.3"/>
    <property type="RefSeq nucleotide sequence ID" value="NM_198542.3"/>
    <property type="RefSeq protein sequence ID" value="NP_940944.1"/>
</dbReference>
<dbReference type="UCSC" id="uc002qox.4">
    <molecule id="Q6PK81-1"/>
    <property type="organism name" value="human"/>
</dbReference>
<dbReference type="AGR" id="HGNC:30487"/>
<dbReference type="CTD" id="374928"/>
<dbReference type="GeneCards" id="ZNF773"/>
<dbReference type="HGNC" id="HGNC:30487">
    <property type="gene designation" value="ZNF773"/>
</dbReference>
<dbReference type="HPA" id="ENSG00000152439">
    <property type="expression patterns" value="Low tissue specificity"/>
</dbReference>
<dbReference type="neXtProt" id="NX_Q6PK81"/>
<dbReference type="OpenTargets" id="ENSG00000152439"/>
<dbReference type="PharmGKB" id="PA162410357"/>
<dbReference type="VEuPathDB" id="HostDB:ENSG00000152439"/>
<dbReference type="eggNOG" id="KOG1721">
    <property type="taxonomic scope" value="Eukaryota"/>
</dbReference>
<dbReference type="GeneTree" id="ENSGT00940000163779"/>
<dbReference type="HOGENOM" id="CLU_002678_0_2_1"/>
<dbReference type="InParanoid" id="Q6PK81"/>
<dbReference type="OMA" id="SREAFHP"/>
<dbReference type="OrthoDB" id="427030at2759"/>
<dbReference type="PAN-GO" id="Q6PK81">
    <property type="GO annotations" value="4 GO annotations based on evolutionary models"/>
</dbReference>
<dbReference type="PhylomeDB" id="Q6PK81"/>
<dbReference type="TreeFam" id="TF339848"/>
<dbReference type="PathwayCommons" id="Q6PK81"/>
<dbReference type="Reactome" id="R-HSA-212436">
    <property type="pathway name" value="Generic Transcription Pathway"/>
</dbReference>
<dbReference type="SignaLink" id="Q6PK81"/>
<dbReference type="BioGRID-ORCS" id="374928">
    <property type="hits" value="6 hits in 1081 CRISPR screens"/>
</dbReference>
<dbReference type="GenomeRNAi" id="374928"/>
<dbReference type="Pharos" id="Q6PK81">
    <property type="development level" value="Tdark"/>
</dbReference>
<dbReference type="PRO" id="PR:Q6PK81"/>
<dbReference type="Proteomes" id="UP000005640">
    <property type="component" value="Chromosome 19"/>
</dbReference>
<dbReference type="RNAct" id="Q6PK81">
    <property type="molecule type" value="protein"/>
</dbReference>
<dbReference type="Bgee" id="ENSG00000152439">
    <property type="expression patterns" value="Expressed in primordial germ cell in gonad and 99 other cell types or tissues"/>
</dbReference>
<dbReference type="ExpressionAtlas" id="Q6PK81">
    <property type="expression patterns" value="baseline and differential"/>
</dbReference>
<dbReference type="GO" id="GO:0005634">
    <property type="term" value="C:nucleus"/>
    <property type="evidence" value="ECO:0000318"/>
    <property type="project" value="GO_Central"/>
</dbReference>
<dbReference type="GO" id="GO:0000981">
    <property type="term" value="F:DNA-binding transcription factor activity, RNA polymerase II-specific"/>
    <property type="evidence" value="ECO:0000318"/>
    <property type="project" value="GO_Central"/>
</dbReference>
<dbReference type="GO" id="GO:0000978">
    <property type="term" value="F:RNA polymerase II cis-regulatory region sequence-specific DNA binding"/>
    <property type="evidence" value="ECO:0000318"/>
    <property type="project" value="GO_Central"/>
</dbReference>
<dbReference type="GO" id="GO:0008270">
    <property type="term" value="F:zinc ion binding"/>
    <property type="evidence" value="ECO:0007669"/>
    <property type="project" value="UniProtKB-KW"/>
</dbReference>
<dbReference type="GO" id="GO:0006357">
    <property type="term" value="P:regulation of transcription by RNA polymerase II"/>
    <property type="evidence" value="ECO:0000318"/>
    <property type="project" value="GO_Central"/>
</dbReference>
<dbReference type="CDD" id="cd07765">
    <property type="entry name" value="KRAB_A-box"/>
    <property type="match status" value="1"/>
</dbReference>
<dbReference type="FunFam" id="3.30.160.60:FF:001478">
    <property type="entry name" value="Zinc finger protein 134"/>
    <property type="match status" value="1"/>
</dbReference>
<dbReference type="FunFam" id="3.30.160.60:FF:000295">
    <property type="entry name" value="zinc finger protein 19"/>
    <property type="match status" value="1"/>
</dbReference>
<dbReference type="FunFam" id="3.30.160.60:FF:002343">
    <property type="entry name" value="Zinc finger protein 33A"/>
    <property type="match status" value="1"/>
</dbReference>
<dbReference type="FunFam" id="3.30.160.60:FF:000127">
    <property type="entry name" value="Zinc finger protein 354C"/>
    <property type="match status" value="1"/>
</dbReference>
<dbReference type="FunFam" id="3.30.160.60:FF:002090">
    <property type="entry name" value="Zinc finger protein 473"/>
    <property type="match status" value="1"/>
</dbReference>
<dbReference type="FunFam" id="3.30.160.60:FF:000281">
    <property type="entry name" value="Zinc finger protein 558 isoform X1"/>
    <property type="match status" value="1"/>
</dbReference>
<dbReference type="FunFam" id="3.30.160.60:FF:000098">
    <property type="entry name" value="Zinc finger protein 614"/>
    <property type="match status" value="3"/>
</dbReference>
<dbReference type="Gene3D" id="6.10.140.140">
    <property type="match status" value="1"/>
</dbReference>
<dbReference type="Gene3D" id="3.30.160.60">
    <property type="entry name" value="Classic Zinc Finger"/>
    <property type="match status" value="9"/>
</dbReference>
<dbReference type="InterPro" id="IPR050589">
    <property type="entry name" value="Ikaros_C2H2-ZF"/>
</dbReference>
<dbReference type="InterPro" id="IPR001909">
    <property type="entry name" value="KRAB"/>
</dbReference>
<dbReference type="InterPro" id="IPR036051">
    <property type="entry name" value="KRAB_dom_sf"/>
</dbReference>
<dbReference type="InterPro" id="IPR036236">
    <property type="entry name" value="Znf_C2H2_sf"/>
</dbReference>
<dbReference type="InterPro" id="IPR013087">
    <property type="entry name" value="Znf_C2H2_type"/>
</dbReference>
<dbReference type="PANTHER" id="PTHR24404">
    <property type="entry name" value="ZINC FINGER PROTEIN"/>
    <property type="match status" value="1"/>
</dbReference>
<dbReference type="PANTHER" id="PTHR24404:SF41">
    <property type="entry name" value="ZINC FINGER PROTEIN 613"/>
    <property type="match status" value="1"/>
</dbReference>
<dbReference type="Pfam" id="PF01352">
    <property type="entry name" value="KRAB"/>
    <property type="match status" value="1"/>
</dbReference>
<dbReference type="Pfam" id="PF00096">
    <property type="entry name" value="zf-C2H2"/>
    <property type="match status" value="9"/>
</dbReference>
<dbReference type="SMART" id="SM00349">
    <property type="entry name" value="KRAB"/>
    <property type="match status" value="1"/>
</dbReference>
<dbReference type="SMART" id="SM00355">
    <property type="entry name" value="ZnF_C2H2"/>
    <property type="match status" value="9"/>
</dbReference>
<dbReference type="SUPFAM" id="SSF57667">
    <property type="entry name" value="beta-beta-alpha zinc fingers"/>
    <property type="match status" value="5"/>
</dbReference>
<dbReference type="SUPFAM" id="SSF109640">
    <property type="entry name" value="KRAB domain (Kruppel-associated box)"/>
    <property type="match status" value="1"/>
</dbReference>
<dbReference type="PROSITE" id="PS50805">
    <property type="entry name" value="KRAB"/>
    <property type="match status" value="1"/>
</dbReference>
<dbReference type="PROSITE" id="PS00028">
    <property type="entry name" value="ZINC_FINGER_C2H2_1"/>
    <property type="match status" value="9"/>
</dbReference>
<dbReference type="PROSITE" id="PS50157">
    <property type="entry name" value="ZINC_FINGER_C2H2_2"/>
    <property type="match status" value="9"/>
</dbReference>
<sequence length="442" mass="50502">MAAATLRDPAQQGYVTFEDVAVYFSQEEWRLLDDAQRLLYRNVMLENFTLLASLGLASSKTHEITQLESWEEPFMPAWEVVTSAILRGSWQGAKAEAAAEQSASVEVPSSNVQQHQKQHCGEKPLKRQEGRVPVLRSCRVHLSEKSLQSREVGKDLLTSSGVLKHQVTHTGEKSHRSSKSREAFHAGKRHYKCSECGKAFGQKYLLVQHQRLHTGEKPYECSECGKLFSHKSNLFIHQIVHTGERPYGCSDCGKSFSRNADLIQHQRVHTGEKPFTCSECGKAFRHNSTLVQHHRIHTGVRPYECSECGKLFSFNSSLMKHQRVHTGERPYKCSECGKFYSHKSSLINHWRVHTGERPYECSECGKFFSQSSSLMQHRKVHTGEKPFKCNECGRFFSENSSLVKHQRVHTGAKPYECRECGKFFRHSSSLVKHRRIHTGEIQ</sequence>